<gene>
    <name evidence="1" type="primary">rplU</name>
    <name type="ordered locus">PSPTO_0797</name>
</gene>
<comment type="function">
    <text evidence="1">This protein binds to 23S rRNA in the presence of protein L20.</text>
</comment>
<comment type="subunit">
    <text evidence="1">Part of the 50S ribosomal subunit. Contacts protein L20.</text>
</comment>
<comment type="similarity">
    <text evidence="1">Belongs to the bacterial ribosomal protein bL21 family.</text>
</comment>
<sequence length="103" mass="11516">MYAVIVTGGKQYKVAPGEYLKIEKLEIATGESVTFDRVLLVGNGDDVNIGAPVVAGATVVAEVISQGRHDKVRIIKFRRRKHHMKRMGHRQWYTEIKITGIQA</sequence>
<keyword id="KW-1185">Reference proteome</keyword>
<keyword id="KW-0687">Ribonucleoprotein</keyword>
<keyword id="KW-0689">Ribosomal protein</keyword>
<keyword id="KW-0694">RNA-binding</keyword>
<keyword id="KW-0699">rRNA-binding</keyword>
<feature type="chain" id="PRO_0000270714" description="Large ribosomal subunit protein bL21">
    <location>
        <begin position="1"/>
        <end position="103"/>
    </location>
</feature>
<name>RL21_PSESM</name>
<evidence type="ECO:0000255" key="1">
    <source>
        <dbReference type="HAMAP-Rule" id="MF_01363"/>
    </source>
</evidence>
<evidence type="ECO:0000305" key="2"/>
<proteinExistence type="inferred from homology"/>
<reference key="1">
    <citation type="journal article" date="2003" name="Proc. Natl. Acad. Sci. U.S.A.">
        <title>The complete genome sequence of the Arabidopsis and tomato pathogen Pseudomonas syringae pv. tomato DC3000.</title>
        <authorList>
            <person name="Buell C.R."/>
            <person name="Joardar V."/>
            <person name="Lindeberg M."/>
            <person name="Selengut J."/>
            <person name="Paulsen I.T."/>
            <person name="Gwinn M.L."/>
            <person name="Dodson R.J."/>
            <person name="DeBoy R.T."/>
            <person name="Durkin A.S."/>
            <person name="Kolonay J.F."/>
            <person name="Madupu R."/>
            <person name="Daugherty S.C."/>
            <person name="Brinkac L.M."/>
            <person name="Beanan M.J."/>
            <person name="Haft D.H."/>
            <person name="Nelson W.C."/>
            <person name="Davidsen T.M."/>
            <person name="Zafar N."/>
            <person name="Zhou L."/>
            <person name="Liu J."/>
            <person name="Yuan Q."/>
            <person name="Khouri H.M."/>
            <person name="Fedorova N.B."/>
            <person name="Tran B."/>
            <person name="Russell D."/>
            <person name="Berry K.J."/>
            <person name="Utterback T.R."/>
            <person name="Van Aken S.E."/>
            <person name="Feldblyum T.V."/>
            <person name="D'Ascenzo M."/>
            <person name="Deng W.-L."/>
            <person name="Ramos A.R."/>
            <person name="Alfano J.R."/>
            <person name="Cartinhour S."/>
            <person name="Chatterjee A.K."/>
            <person name="Delaney T.P."/>
            <person name="Lazarowitz S.G."/>
            <person name="Martin G.B."/>
            <person name="Schneider D.J."/>
            <person name="Tang X."/>
            <person name="Bender C.L."/>
            <person name="White O."/>
            <person name="Fraser C.M."/>
            <person name="Collmer A."/>
        </authorList>
    </citation>
    <scope>NUCLEOTIDE SEQUENCE [LARGE SCALE GENOMIC DNA]</scope>
    <source>
        <strain>ATCC BAA-871 / DC3000</strain>
    </source>
</reference>
<protein>
    <recommendedName>
        <fullName evidence="1">Large ribosomal subunit protein bL21</fullName>
    </recommendedName>
    <alternativeName>
        <fullName evidence="2">50S ribosomal protein L21</fullName>
    </alternativeName>
</protein>
<dbReference type="EMBL" id="AE016853">
    <property type="protein sequence ID" value="AAO54339.1"/>
    <property type="molecule type" value="Genomic_DNA"/>
</dbReference>
<dbReference type="RefSeq" id="NP_790644.1">
    <property type="nucleotide sequence ID" value="NC_004578.1"/>
</dbReference>
<dbReference type="RefSeq" id="WP_003381306.1">
    <property type="nucleotide sequence ID" value="NC_004578.1"/>
</dbReference>
<dbReference type="SMR" id="Q889F3"/>
<dbReference type="STRING" id="223283.PSPTO_0797"/>
<dbReference type="GeneID" id="61791007"/>
<dbReference type="KEGG" id="pst:PSPTO_0797"/>
<dbReference type="PATRIC" id="fig|223283.9.peg.810"/>
<dbReference type="eggNOG" id="COG0261">
    <property type="taxonomic scope" value="Bacteria"/>
</dbReference>
<dbReference type="HOGENOM" id="CLU_061463_3_2_6"/>
<dbReference type="OrthoDB" id="9813334at2"/>
<dbReference type="PhylomeDB" id="Q889F3"/>
<dbReference type="Proteomes" id="UP000002515">
    <property type="component" value="Chromosome"/>
</dbReference>
<dbReference type="GO" id="GO:0005737">
    <property type="term" value="C:cytoplasm"/>
    <property type="evidence" value="ECO:0007669"/>
    <property type="project" value="UniProtKB-ARBA"/>
</dbReference>
<dbReference type="GO" id="GO:1990904">
    <property type="term" value="C:ribonucleoprotein complex"/>
    <property type="evidence" value="ECO:0007669"/>
    <property type="project" value="UniProtKB-KW"/>
</dbReference>
<dbReference type="GO" id="GO:0005840">
    <property type="term" value="C:ribosome"/>
    <property type="evidence" value="ECO:0007669"/>
    <property type="project" value="UniProtKB-KW"/>
</dbReference>
<dbReference type="GO" id="GO:0019843">
    <property type="term" value="F:rRNA binding"/>
    <property type="evidence" value="ECO:0007669"/>
    <property type="project" value="UniProtKB-UniRule"/>
</dbReference>
<dbReference type="GO" id="GO:0003735">
    <property type="term" value="F:structural constituent of ribosome"/>
    <property type="evidence" value="ECO:0007669"/>
    <property type="project" value="InterPro"/>
</dbReference>
<dbReference type="GO" id="GO:0006412">
    <property type="term" value="P:translation"/>
    <property type="evidence" value="ECO:0007669"/>
    <property type="project" value="UniProtKB-UniRule"/>
</dbReference>
<dbReference type="HAMAP" id="MF_01363">
    <property type="entry name" value="Ribosomal_bL21"/>
    <property type="match status" value="1"/>
</dbReference>
<dbReference type="InterPro" id="IPR028909">
    <property type="entry name" value="bL21-like"/>
</dbReference>
<dbReference type="InterPro" id="IPR036164">
    <property type="entry name" value="bL21-like_sf"/>
</dbReference>
<dbReference type="InterPro" id="IPR001787">
    <property type="entry name" value="Ribosomal_bL21"/>
</dbReference>
<dbReference type="InterPro" id="IPR018258">
    <property type="entry name" value="Ribosomal_bL21_CS"/>
</dbReference>
<dbReference type="NCBIfam" id="TIGR00061">
    <property type="entry name" value="L21"/>
    <property type="match status" value="1"/>
</dbReference>
<dbReference type="PANTHER" id="PTHR21349">
    <property type="entry name" value="50S RIBOSOMAL PROTEIN L21"/>
    <property type="match status" value="1"/>
</dbReference>
<dbReference type="PANTHER" id="PTHR21349:SF0">
    <property type="entry name" value="LARGE RIBOSOMAL SUBUNIT PROTEIN BL21M"/>
    <property type="match status" value="1"/>
</dbReference>
<dbReference type="Pfam" id="PF00829">
    <property type="entry name" value="Ribosomal_L21p"/>
    <property type="match status" value="1"/>
</dbReference>
<dbReference type="SUPFAM" id="SSF141091">
    <property type="entry name" value="L21p-like"/>
    <property type="match status" value="1"/>
</dbReference>
<dbReference type="PROSITE" id="PS01169">
    <property type="entry name" value="RIBOSOMAL_L21"/>
    <property type="match status" value="1"/>
</dbReference>
<accession>Q889F3</accession>
<organism>
    <name type="scientific">Pseudomonas syringae pv. tomato (strain ATCC BAA-871 / DC3000)</name>
    <dbReference type="NCBI Taxonomy" id="223283"/>
    <lineage>
        <taxon>Bacteria</taxon>
        <taxon>Pseudomonadati</taxon>
        <taxon>Pseudomonadota</taxon>
        <taxon>Gammaproteobacteria</taxon>
        <taxon>Pseudomonadales</taxon>
        <taxon>Pseudomonadaceae</taxon>
        <taxon>Pseudomonas</taxon>
    </lineage>
</organism>